<evidence type="ECO:0000250" key="1">
    <source>
        <dbReference type="UniProtKB" id="P13482"/>
    </source>
</evidence>
<evidence type="ECO:0000250" key="2">
    <source>
        <dbReference type="UniProtKB" id="P32356"/>
    </source>
</evidence>
<evidence type="ECO:0000269" key="3">
    <source>
    </source>
</evidence>
<evidence type="ECO:0000303" key="4">
    <source>
    </source>
</evidence>
<evidence type="ECO:0000305" key="5"/>
<name>TREB_NEUCR</name>
<comment type="function">
    <text evidence="2">Hydrolyzes intracellular trehalose to glucose.</text>
</comment>
<comment type="catalytic activity">
    <reaction evidence="2">
        <text>alpha,alpha-trehalose + H2O = alpha-D-glucose + beta-D-glucose</text>
        <dbReference type="Rhea" id="RHEA:32675"/>
        <dbReference type="ChEBI" id="CHEBI:15377"/>
        <dbReference type="ChEBI" id="CHEBI:15903"/>
        <dbReference type="ChEBI" id="CHEBI:16551"/>
        <dbReference type="ChEBI" id="CHEBI:17925"/>
        <dbReference type="EC" id="3.2.1.28"/>
    </reaction>
</comment>
<comment type="cofactor">
    <cofactor evidence="2">
        <name>Ca(2+)</name>
        <dbReference type="ChEBI" id="CHEBI:29108"/>
    </cofactor>
</comment>
<comment type="pathway">
    <text evidence="5">Carbohydrate degradation.</text>
</comment>
<comment type="subcellular location">
    <subcellularLocation>
        <location evidence="2">Cytoplasm</location>
    </subcellularLocation>
</comment>
<comment type="developmental stage">
    <text evidence="3">Induced during conidial germination.</text>
</comment>
<comment type="induction">
    <text evidence="3">Induced during recovery from thermal stress.</text>
</comment>
<comment type="similarity">
    <text evidence="5">Belongs to the glycosyl hydrolase 37 family.</text>
</comment>
<comment type="sequence caution" evidence="5">
    <conflict type="frameshift">
        <sequence resource="EMBL-CDS" id="AAC01744"/>
    </conflict>
</comment>
<keyword id="KW-0106">Calcium</keyword>
<keyword id="KW-0963">Cytoplasm</keyword>
<keyword id="KW-0326">Glycosidase</keyword>
<keyword id="KW-0378">Hydrolase</keyword>
<keyword id="KW-0479">Metal-binding</keyword>
<keyword id="KW-1185">Reference proteome</keyword>
<organism>
    <name type="scientific">Neurospora crassa (strain ATCC 24698 / 74-OR23-1A / CBS 708.71 / DSM 1257 / FGSC 987)</name>
    <dbReference type="NCBI Taxonomy" id="367110"/>
    <lineage>
        <taxon>Eukaryota</taxon>
        <taxon>Fungi</taxon>
        <taxon>Dikarya</taxon>
        <taxon>Ascomycota</taxon>
        <taxon>Pezizomycotina</taxon>
        <taxon>Sordariomycetes</taxon>
        <taxon>Sordariomycetidae</taxon>
        <taxon>Sordariales</taxon>
        <taxon>Sordariaceae</taxon>
        <taxon>Neurospora</taxon>
    </lineage>
</organism>
<feature type="chain" id="PRO_0000173796" description="Cytosolic neutral trehalase">
    <location>
        <begin position="1"/>
        <end position="744"/>
    </location>
</feature>
<feature type="active site" description="Proton donor/acceptor" evidence="2">
    <location>
        <position position="460"/>
    </location>
</feature>
<feature type="active site" description="Proton donor/acceptor" evidence="2">
    <location>
        <position position="665"/>
    </location>
</feature>
<feature type="binding site" evidence="2">
    <location>
        <position position="99"/>
    </location>
    <ligand>
        <name>Ca(2+)</name>
        <dbReference type="ChEBI" id="CHEBI:29108"/>
    </ligand>
</feature>
<feature type="binding site" evidence="2">
    <location>
        <position position="101"/>
    </location>
    <ligand>
        <name>Ca(2+)</name>
        <dbReference type="ChEBI" id="CHEBI:29108"/>
    </ligand>
</feature>
<feature type="binding site" evidence="2">
    <location>
        <position position="103"/>
    </location>
    <ligand>
        <name>Ca(2+)</name>
        <dbReference type="ChEBI" id="CHEBI:29108"/>
    </ligand>
</feature>
<feature type="binding site" evidence="2">
    <location>
        <position position="105"/>
    </location>
    <ligand>
        <name>Ca(2+)</name>
        <dbReference type="ChEBI" id="CHEBI:29108"/>
    </ligand>
</feature>
<feature type="binding site" evidence="2">
    <location>
        <position position="110"/>
    </location>
    <ligand>
        <name>Ca(2+)</name>
        <dbReference type="ChEBI" id="CHEBI:29108"/>
    </ligand>
</feature>
<feature type="binding site" evidence="1">
    <location>
        <position position="286"/>
    </location>
    <ligand>
        <name>substrate</name>
    </ligand>
</feature>
<feature type="binding site" evidence="2">
    <location>
        <begin position="293"/>
        <end position="294"/>
    </location>
    <ligand>
        <name>substrate</name>
    </ligand>
</feature>
<feature type="binding site" evidence="2">
    <location>
        <position position="330"/>
    </location>
    <ligand>
        <name>substrate</name>
    </ligand>
</feature>
<feature type="binding site" evidence="2">
    <location>
        <begin position="339"/>
        <end position="341"/>
    </location>
    <ligand>
        <name>substrate</name>
    </ligand>
</feature>
<feature type="binding site" evidence="2">
    <location>
        <position position="406"/>
    </location>
    <ligand>
        <name>substrate</name>
    </ligand>
</feature>
<feature type="binding site" evidence="2">
    <location>
        <position position="455"/>
    </location>
    <ligand>
        <name>substrate</name>
    </ligand>
</feature>
<feature type="binding site" evidence="2">
    <location>
        <position position="458"/>
    </location>
    <ligand>
        <name>substrate</name>
    </ligand>
</feature>
<dbReference type="EC" id="3.2.1.28" evidence="2"/>
<dbReference type="EMBL" id="AF044218">
    <property type="protein sequence ID" value="AAC01744.1"/>
    <property type="status" value="ALT_FRAME"/>
    <property type="molecule type" value="mRNA"/>
</dbReference>
<dbReference type="EMBL" id="AL807369">
    <property type="protein sequence ID" value="CAD36994.1"/>
    <property type="molecule type" value="Genomic_DNA"/>
</dbReference>
<dbReference type="EMBL" id="CM002240">
    <property type="protein sequence ID" value="EAA31609.1"/>
    <property type="molecule type" value="Genomic_DNA"/>
</dbReference>
<dbReference type="SMR" id="O42783"/>
<dbReference type="FunCoup" id="O42783">
    <property type="interactions" value="291"/>
</dbReference>
<dbReference type="STRING" id="367110.O42783"/>
<dbReference type="CAZy" id="GH37">
    <property type="family name" value="Glycoside Hydrolase Family 37"/>
</dbReference>
<dbReference type="PaxDb" id="5141-EFNCRP00000003938"/>
<dbReference type="EnsemblFungi" id="EAA31609">
    <property type="protein sequence ID" value="EAA31609"/>
    <property type="gene ID" value="NCU04221"/>
</dbReference>
<dbReference type="KEGG" id="ncr:NCU04221"/>
<dbReference type="VEuPathDB" id="FungiDB:NCU04221"/>
<dbReference type="HOGENOM" id="CLU_006451_1_1_1"/>
<dbReference type="InParanoid" id="O42783"/>
<dbReference type="OMA" id="WLFMMTK"/>
<dbReference type="OrthoDB" id="3542292at2759"/>
<dbReference type="BRENDA" id="3.2.1.28">
    <property type="organism ID" value="3627"/>
</dbReference>
<dbReference type="Proteomes" id="UP000001805">
    <property type="component" value="Chromosome 2, Linkage Group V"/>
</dbReference>
<dbReference type="GO" id="GO:0005946">
    <property type="term" value="C:alpha,alpha-trehalose-phosphate synthase complex (UDP-forming)"/>
    <property type="evidence" value="ECO:0007669"/>
    <property type="project" value="EnsemblFungi"/>
</dbReference>
<dbReference type="GO" id="GO:0004555">
    <property type="term" value="F:alpha,alpha-trehalase activity"/>
    <property type="evidence" value="ECO:0000318"/>
    <property type="project" value="GO_Central"/>
</dbReference>
<dbReference type="GO" id="GO:0005509">
    <property type="term" value="F:calcium ion binding"/>
    <property type="evidence" value="ECO:0007669"/>
    <property type="project" value="EnsemblFungi"/>
</dbReference>
<dbReference type="GO" id="GO:0030437">
    <property type="term" value="P:ascospore formation"/>
    <property type="evidence" value="ECO:0007669"/>
    <property type="project" value="EnsemblFungi"/>
</dbReference>
<dbReference type="GO" id="GO:0005993">
    <property type="term" value="P:trehalose catabolic process"/>
    <property type="evidence" value="ECO:0000318"/>
    <property type="project" value="GO_Central"/>
</dbReference>
<dbReference type="FunFam" id="1.50.10.10:FF:000026">
    <property type="entry name" value="Trehalase"/>
    <property type="match status" value="1"/>
</dbReference>
<dbReference type="Gene3D" id="1.50.10.10">
    <property type="match status" value="1"/>
</dbReference>
<dbReference type="InterPro" id="IPR008928">
    <property type="entry name" value="6-hairpin_glycosidase_sf"/>
</dbReference>
<dbReference type="InterPro" id="IPR012341">
    <property type="entry name" value="6hp_glycosidase-like_sf"/>
</dbReference>
<dbReference type="InterPro" id="IPR001661">
    <property type="entry name" value="Glyco_hydro_37"/>
</dbReference>
<dbReference type="InterPro" id="IPR018232">
    <property type="entry name" value="Glyco_hydro_37_CS"/>
</dbReference>
<dbReference type="InterPro" id="IPR011120">
    <property type="entry name" value="Trehalase_Ca-bd"/>
</dbReference>
<dbReference type="PANTHER" id="PTHR23403:SF6">
    <property type="entry name" value="CYTOSOLIC NEUTRAL TREHALASE-RELATED"/>
    <property type="match status" value="1"/>
</dbReference>
<dbReference type="PANTHER" id="PTHR23403">
    <property type="entry name" value="TREHALASE"/>
    <property type="match status" value="1"/>
</dbReference>
<dbReference type="Pfam" id="PF01204">
    <property type="entry name" value="Trehalase"/>
    <property type="match status" value="1"/>
</dbReference>
<dbReference type="Pfam" id="PF07492">
    <property type="entry name" value="Trehalase_Ca-bi"/>
    <property type="match status" value="1"/>
</dbReference>
<dbReference type="PRINTS" id="PR00744">
    <property type="entry name" value="GLHYDRLASE37"/>
</dbReference>
<dbReference type="SUPFAM" id="SSF48208">
    <property type="entry name" value="Six-hairpin glycosidases"/>
    <property type="match status" value="1"/>
</dbReference>
<dbReference type="PROSITE" id="PS00927">
    <property type="entry name" value="TREHALASE_1"/>
    <property type="match status" value="1"/>
</dbReference>
<dbReference type="PROSITE" id="PS00928">
    <property type="entry name" value="TREHALASE_2"/>
    <property type="match status" value="1"/>
</dbReference>
<protein>
    <recommendedName>
        <fullName>Cytosolic neutral trehalase</fullName>
        <ecNumber evidence="2">3.2.1.28</ecNumber>
    </recommendedName>
    <alternativeName>
        <fullName>Alpha,alpha-trehalase</fullName>
    </alternativeName>
    <alternativeName>
        <fullName>Alpha,alpha-trehalose glucohydrolase</fullName>
    </alternativeName>
</protein>
<reference key="1">
    <citation type="journal article" date="1999" name="Mol. Microbiol.">
        <title>Neutral trehalases catalyse intracellular trehalose breakdown in the filamentous fungi Aspergillus nidulans and Neurospora crassa.</title>
        <authorList>
            <person name="d'Enfert C."/>
            <person name="Bonini B.M."/>
            <person name="Zapella P.D.A."/>
            <person name="Fontaine T."/>
            <person name="da Silva A.M."/>
            <person name="Terenzi H.F."/>
        </authorList>
    </citation>
    <scope>NUCLEOTIDE SEQUENCE [MRNA]</scope>
    <scope>DEVELOPMENTAL STAGE</scope>
    <scope>INDUCTION</scope>
    <source>
        <strain>ATCC 24698 / 74-OR23-1A / CBS 708.71 / DSM 1257 / FGSC 987</strain>
    </source>
</reference>
<reference key="2">
    <citation type="journal article" date="2003" name="Nucleic Acids Res.">
        <title>What's in the genome of a filamentous fungus? Analysis of the Neurospora genome sequence.</title>
        <authorList>
            <person name="Mannhaupt G."/>
            <person name="Montrone C."/>
            <person name="Haase D."/>
            <person name="Mewes H.-W."/>
            <person name="Aign V."/>
            <person name="Hoheisel J.D."/>
            <person name="Fartmann B."/>
            <person name="Nyakatura G."/>
            <person name="Kempken F."/>
            <person name="Maier J."/>
            <person name="Schulte U."/>
        </authorList>
    </citation>
    <scope>NUCLEOTIDE SEQUENCE [LARGE SCALE GENOMIC DNA]</scope>
    <source>
        <strain>ATCC 24698 / 74-OR23-1A / CBS 708.71 / DSM 1257 / FGSC 987</strain>
    </source>
</reference>
<reference key="3">
    <citation type="journal article" date="2003" name="Nature">
        <title>The genome sequence of the filamentous fungus Neurospora crassa.</title>
        <authorList>
            <person name="Galagan J.E."/>
            <person name="Calvo S.E."/>
            <person name="Borkovich K.A."/>
            <person name="Selker E.U."/>
            <person name="Read N.D."/>
            <person name="Jaffe D.B."/>
            <person name="FitzHugh W."/>
            <person name="Ma L.-J."/>
            <person name="Smirnov S."/>
            <person name="Purcell S."/>
            <person name="Rehman B."/>
            <person name="Elkins T."/>
            <person name="Engels R."/>
            <person name="Wang S."/>
            <person name="Nielsen C.B."/>
            <person name="Butler J."/>
            <person name="Endrizzi M."/>
            <person name="Qui D."/>
            <person name="Ianakiev P."/>
            <person name="Bell-Pedersen D."/>
            <person name="Nelson M.A."/>
            <person name="Werner-Washburne M."/>
            <person name="Selitrennikoff C.P."/>
            <person name="Kinsey J.A."/>
            <person name="Braun E.L."/>
            <person name="Zelter A."/>
            <person name="Schulte U."/>
            <person name="Kothe G.O."/>
            <person name="Jedd G."/>
            <person name="Mewes H.-W."/>
            <person name="Staben C."/>
            <person name="Marcotte E."/>
            <person name="Greenberg D."/>
            <person name="Roy A."/>
            <person name="Foley K."/>
            <person name="Naylor J."/>
            <person name="Stange-Thomann N."/>
            <person name="Barrett R."/>
            <person name="Gnerre S."/>
            <person name="Kamal M."/>
            <person name="Kamvysselis M."/>
            <person name="Mauceli E.W."/>
            <person name="Bielke C."/>
            <person name="Rudd S."/>
            <person name="Frishman D."/>
            <person name="Krystofova S."/>
            <person name="Rasmussen C."/>
            <person name="Metzenberg R.L."/>
            <person name="Perkins D.D."/>
            <person name="Kroken S."/>
            <person name="Cogoni C."/>
            <person name="Macino G."/>
            <person name="Catcheside D.E.A."/>
            <person name="Li W."/>
            <person name="Pratt R.J."/>
            <person name="Osmani S.A."/>
            <person name="DeSouza C.P.C."/>
            <person name="Glass N.L."/>
            <person name="Orbach M.J."/>
            <person name="Berglund J.A."/>
            <person name="Voelker R."/>
            <person name="Yarden O."/>
            <person name="Plamann M."/>
            <person name="Seiler S."/>
            <person name="Dunlap J.C."/>
            <person name="Radford A."/>
            <person name="Aramayo R."/>
            <person name="Natvig D.O."/>
            <person name="Alex L.A."/>
            <person name="Mannhaupt G."/>
            <person name="Ebbole D.J."/>
            <person name="Freitag M."/>
            <person name="Paulsen I."/>
            <person name="Sachs M.S."/>
            <person name="Lander E.S."/>
            <person name="Nusbaum C."/>
            <person name="Birren B.W."/>
        </authorList>
    </citation>
    <scope>NUCLEOTIDE SEQUENCE [LARGE SCALE GENOMIC DNA]</scope>
    <source>
        <strain>ATCC 24698 / 74-OR23-1A / CBS 708.71 / DSM 1257 / FGSC 987</strain>
    </source>
</reference>
<accession>O42783</accession>
<accession>Q1K6U9</accession>
<accession>Q8NIK6</accession>
<proteinExistence type="evidence at transcript level"/>
<gene>
    <name evidence="4" type="primary">treB</name>
    <name type="ORF">G15D1.050</name>
    <name type="ORF">NCU04221</name>
</gene>
<sequence length="744" mass="85969">MTSQPSSGKGRGRNLSIDEYNVYDDAKTYYTTEDRHHNHRAGARTRTYSQNSLFKQFERLGLQKEPYRRGSHDESTIPQSRRFLIQVEPTLQSLQSQEDTDGNMQITIEDNGPKVLSLRTAASNGYNRFDIRGTYMLSNLLQELYLAKEYGRKQIILDEARLNENPVNRLSRLIKDHFWEGLTRRIDASSIEIAARDPKDWTDDPRPRIYIPRGAPEQHEYYTKVALDRPELRLDVQYLPEKITPEIVRDMNAKPGLLAVDMEEVVDPKTGEKTLRGRPFVVPGGRFNELYGWDSYMESLGLLVNDRVDLAKSMVQNFCFCIKHYGKILNATRSYYLCRSQPPFLTDMTLRVYDKIKHEPGALEFLRQSLLAAIKEYYSVWTAEPRLDPVTGLSRYRPEGLGVPPETEAGHFIHILEPYAKKHNMSFDEFVYAYNHGEIKEPTLDDYFMHDRAVRESGHDTTYRFEGICADLATIDLNSLLFKYETDIARTIRNVFHDKFEVPDDWLATNNPAASKLETSAMWDRRAKRRKLAIDKYLWNEEAGMYFDYNTATRKQCNYESATTFWALWAGVSNPKQAAAMVTKALPKLEAFGGLLSGTKESRGEIGLERPNRQWDYPYGWAPQQILAWTGLYRYGFNEEAERLAYKWLFMITKAFVDFNGVVVEKYDVTRPIDPHRVDAEYGNQGLDFKGVAKEGFGWVNASYVYGLQIVNAHMRRALGTLTPYETFMKAVEENRNKALSELV</sequence>